<reference key="1">
    <citation type="submission" date="2006-05" db="EMBL/GenBank/DDBJ databases">
        <authorList>
            <consortium name="Genoscope"/>
        </authorList>
    </citation>
    <scope>NUCLEOTIDE SEQUENCE [LARGE SCALE GENOMIC DNA]</scope>
    <source>
        <strain>WH7803</strain>
    </source>
</reference>
<accession>A5GND3</accession>
<comment type="function">
    <text evidence="1">Key component of the proton channel; it plays a direct role in the translocation of protons across the membrane.</text>
</comment>
<comment type="subunit">
    <text evidence="1">F-type ATPases have 2 components, CF(1) - the catalytic core - and CF(0) - the membrane proton channel. CF(1) has five subunits: alpha(3), beta(3), gamma(1), delta(1), epsilon(1). CF(0) has four main subunits: a, b, b' and c.</text>
</comment>
<comment type="subcellular location">
    <subcellularLocation>
        <location evidence="1">Cellular thylakoid membrane</location>
        <topology evidence="1">Multi-pass membrane protein</topology>
    </subcellularLocation>
</comment>
<comment type="similarity">
    <text evidence="1">Belongs to the ATPase A chain family.</text>
</comment>
<name>ATP6_SYNPW</name>
<feature type="chain" id="PRO_0000362491" description="ATP synthase subunit a">
    <location>
        <begin position="1"/>
        <end position="242"/>
    </location>
</feature>
<feature type="transmembrane region" description="Helical" evidence="1">
    <location>
        <begin position="28"/>
        <end position="48"/>
    </location>
</feature>
<feature type="transmembrane region" description="Helical" evidence="1">
    <location>
        <begin position="89"/>
        <end position="109"/>
    </location>
</feature>
<feature type="transmembrane region" description="Helical" evidence="1">
    <location>
        <begin position="128"/>
        <end position="148"/>
    </location>
</feature>
<feature type="transmembrane region" description="Helical" evidence="1">
    <location>
        <begin position="193"/>
        <end position="213"/>
    </location>
</feature>
<feature type="transmembrane region" description="Helical" evidence="1">
    <location>
        <begin position="214"/>
        <end position="234"/>
    </location>
</feature>
<sequence length="242" mass="27220">MVPSLLNLPFAELEVGQHLYWQIGNLNLHGQVFLSSWVVIGLLLLLVVSGTRKMERDPKGVQNLLEYLWDYLRELAREQIGEKAYRDWLPFVGTLFLFIFVCNWGGALIPWRLVELPNGELGAPTADINTTVAMALLVSLSYFYAGLSRKGLRYFEYYVEPTPIMLPFKIIEDFTKPLSLSFRLFGNILADELVVAVLAFLVPVLVPLPAMFLGLFTSAIQALIFATLAANYIGEAVHEEAH</sequence>
<proteinExistence type="inferred from homology"/>
<organism>
    <name type="scientific">Synechococcus sp. (strain WH7803)</name>
    <dbReference type="NCBI Taxonomy" id="32051"/>
    <lineage>
        <taxon>Bacteria</taxon>
        <taxon>Bacillati</taxon>
        <taxon>Cyanobacteriota</taxon>
        <taxon>Cyanophyceae</taxon>
        <taxon>Synechococcales</taxon>
        <taxon>Synechococcaceae</taxon>
        <taxon>Synechococcus</taxon>
    </lineage>
</organism>
<dbReference type="EMBL" id="CT971583">
    <property type="protein sequence ID" value="CAK24448.1"/>
    <property type="molecule type" value="Genomic_DNA"/>
</dbReference>
<dbReference type="SMR" id="A5GND3"/>
<dbReference type="STRING" id="32051.SynWH7803_2022"/>
<dbReference type="KEGG" id="syx:SynWH7803_2022"/>
<dbReference type="eggNOG" id="COG0356">
    <property type="taxonomic scope" value="Bacteria"/>
</dbReference>
<dbReference type="HOGENOM" id="CLU_041018_2_4_3"/>
<dbReference type="OrthoDB" id="9789241at2"/>
<dbReference type="Proteomes" id="UP000001566">
    <property type="component" value="Chromosome"/>
</dbReference>
<dbReference type="GO" id="GO:0031676">
    <property type="term" value="C:plasma membrane-derived thylakoid membrane"/>
    <property type="evidence" value="ECO:0007669"/>
    <property type="project" value="UniProtKB-SubCell"/>
</dbReference>
<dbReference type="GO" id="GO:0045259">
    <property type="term" value="C:proton-transporting ATP synthase complex"/>
    <property type="evidence" value="ECO:0007669"/>
    <property type="project" value="UniProtKB-KW"/>
</dbReference>
<dbReference type="GO" id="GO:0046933">
    <property type="term" value="F:proton-transporting ATP synthase activity, rotational mechanism"/>
    <property type="evidence" value="ECO:0007669"/>
    <property type="project" value="UniProtKB-UniRule"/>
</dbReference>
<dbReference type="CDD" id="cd00310">
    <property type="entry name" value="ATP-synt_Fo_a_6"/>
    <property type="match status" value="1"/>
</dbReference>
<dbReference type="FunFam" id="1.20.120.220:FF:000001">
    <property type="entry name" value="ATP synthase subunit a, chloroplastic"/>
    <property type="match status" value="1"/>
</dbReference>
<dbReference type="Gene3D" id="1.20.120.220">
    <property type="entry name" value="ATP synthase, F0 complex, subunit A"/>
    <property type="match status" value="1"/>
</dbReference>
<dbReference type="HAMAP" id="MF_01393">
    <property type="entry name" value="ATP_synth_a_bact"/>
    <property type="match status" value="1"/>
</dbReference>
<dbReference type="InterPro" id="IPR045082">
    <property type="entry name" value="ATP_syn_F0_a_bact/chloroplast"/>
</dbReference>
<dbReference type="InterPro" id="IPR000568">
    <property type="entry name" value="ATP_synth_F0_asu"/>
</dbReference>
<dbReference type="InterPro" id="IPR023011">
    <property type="entry name" value="ATP_synth_F0_asu_AS"/>
</dbReference>
<dbReference type="InterPro" id="IPR035908">
    <property type="entry name" value="F0_ATP_A_sf"/>
</dbReference>
<dbReference type="NCBIfam" id="TIGR01131">
    <property type="entry name" value="ATP_synt_6_or_A"/>
    <property type="match status" value="1"/>
</dbReference>
<dbReference type="PANTHER" id="PTHR42823">
    <property type="entry name" value="ATP SYNTHASE SUBUNIT A, CHLOROPLASTIC"/>
    <property type="match status" value="1"/>
</dbReference>
<dbReference type="PANTHER" id="PTHR42823:SF3">
    <property type="entry name" value="ATP SYNTHASE SUBUNIT A, CHLOROPLASTIC"/>
    <property type="match status" value="1"/>
</dbReference>
<dbReference type="Pfam" id="PF00119">
    <property type="entry name" value="ATP-synt_A"/>
    <property type="match status" value="1"/>
</dbReference>
<dbReference type="PRINTS" id="PR00123">
    <property type="entry name" value="ATPASEA"/>
</dbReference>
<dbReference type="SUPFAM" id="SSF81336">
    <property type="entry name" value="F1F0 ATP synthase subunit A"/>
    <property type="match status" value="1"/>
</dbReference>
<dbReference type="PROSITE" id="PS00449">
    <property type="entry name" value="ATPASE_A"/>
    <property type="match status" value="1"/>
</dbReference>
<gene>
    <name evidence="1" type="primary">atpB</name>
    <name evidence="1" type="synonym">atpI</name>
    <name type="ordered locus">SynWH7803_2022</name>
</gene>
<evidence type="ECO:0000255" key="1">
    <source>
        <dbReference type="HAMAP-Rule" id="MF_01393"/>
    </source>
</evidence>
<protein>
    <recommendedName>
        <fullName evidence="1">ATP synthase subunit a</fullName>
    </recommendedName>
    <alternativeName>
        <fullName evidence="1">ATP synthase F0 sector subunit a</fullName>
    </alternativeName>
    <alternativeName>
        <fullName evidence="1">F-ATPase subunit 6</fullName>
    </alternativeName>
</protein>
<keyword id="KW-0066">ATP synthesis</keyword>
<keyword id="KW-0138">CF(0)</keyword>
<keyword id="KW-0375">Hydrogen ion transport</keyword>
<keyword id="KW-0406">Ion transport</keyword>
<keyword id="KW-0472">Membrane</keyword>
<keyword id="KW-1185">Reference proteome</keyword>
<keyword id="KW-0793">Thylakoid</keyword>
<keyword id="KW-0812">Transmembrane</keyword>
<keyword id="KW-1133">Transmembrane helix</keyword>
<keyword id="KW-0813">Transport</keyword>